<dbReference type="EMBL" id="CU928160">
    <property type="protein sequence ID" value="CAQ98884.1"/>
    <property type="molecule type" value="Genomic_DNA"/>
</dbReference>
<dbReference type="RefSeq" id="WP_000867217.1">
    <property type="nucleotide sequence ID" value="NC_011741.1"/>
</dbReference>
<dbReference type="SMR" id="B7M392"/>
<dbReference type="GeneID" id="93775233"/>
<dbReference type="KEGG" id="ecr:ECIAI1_2033"/>
<dbReference type="HOGENOM" id="CLU_189289_0_0_6"/>
<dbReference type="HAMAP" id="MF_01549">
    <property type="entry name" value="DsrB"/>
    <property type="match status" value="1"/>
</dbReference>
<dbReference type="InterPro" id="IPR019717">
    <property type="entry name" value="Dextransucrase_DSRB"/>
</dbReference>
<dbReference type="NCBIfam" id="NF007981">
    <property type="entry name" value="PRK10708.1"/>
    <property type="match status" value="1"/>
</dbReference>
<dbReference type="Pfam" id="PF10781">
    <property type="entry name" value="DSRB"/>
    <property type="match status" value="1"/>
</dbReference>
<sequence length="62" mass="6946">MKVNDRVTVKTDGGPRRPGVVLAVEEFSEGTMYLVSLEDYPLGIWFFNEAGHQDGIFVEKAE</sequence>
<name>DSRB_ECO8A</name>
<feature type="chain" id="PRO_1000146849" description="Protein DsrB">
    <location>
        <begin position="1"/>
        <end position="62"/>
    </location>
</feature>
<organism>
    <name type="scientific">Escherichia coli O8 (strain IAI1)</name>
    <dbReference type="NCBI Taxonomy" id="585034"/>
    <lineage>
        <taxon>Bacteria</taxon>
        <taxon>Pseudomonadati</taxon>
        <taxon>Pseudomonadota</taxon>
        <taxon>Gammaproteobacteria</taxon>
        <taxon>Enterobacterales</taxon>
        <taxon>Enterobacteriaceae</taxon>
        <taxon>Escherichia</taxon>
    </lineage>
</organism>
<proteinExistence type="inferred from homology"/>
<comment type="similarity">
    <text evidence="1">Belongs to the DsrB family.</text>
</comment>
<protein>
    <recommendedName>
        <fullName evidence="1">Protein DsrB</fullName>
    </recommendedName>
</protein>
<evidence type="ECO:0000255" key="1">
    <source>
        <dbReference type="HAMAP-Rule" id="MF_01549"/>
    </source>
</evidence>
<accession>B7M392</accession>
<gene>
    <name evidence="1" type="primary">dsrB</name>
    <name type="ordered locus">ECIAI1_2033</name>
</gene>
<reference key="1">
    <citation type="journal article" date="2009" name="PLoS Genet.">
        <title>Organised genome dynamics in the Escherichia coli species results in highly diverse adaptive paths.</title>
        <authorList>
            <person name="Touchon M."/>
            <person name="Hoede C."/>
            <person name="Tenaillon O."/>
            <person name="Barbe V."/>
            <person name="Baeriswyl S."/>
            <person name="Bidet P."/>
            <person name="Bingen E."/>
            <person name="Bonacorsi S."/>
            <person name="Bouchier C."/>
            <person name="Bouvet O."/>
            <person name="Calteau A."/>
            <person name="Chiapello H."/>
            <person name="Clermont O."/>
            <person name="Cruveiller S."/>
            <person name="Danchin A."/>
            <person name="Diard M."/>
            <person name="Dossat C."/>
            <person name="Karoui M.E."/>
            <person name="Frapy E."/>
            <person name="Garry L."/>
            <person name="Ghigo J.M."/>
            <person name="Gilles A.M."/>
            <person name="Johnson J."/>
            <person name="Le Bouguenec C."/>
            <person name="Lescat M."/>
            <person name="Mangenot S."/>
            <person name="Martinez-Jehanne V."/>
            <person name="Matic I."/>
            <person name="Nassif X."/>
            <person name="Oztas S."/>
            <person name="Petit M.A."/>
            <person name="Pichon C."/>
            <person name="Rouy Z."/>
            <person name="Ruf C.S."/>
            <person name="Schneider D."/>
            <person name="Tourret J."/>
            <person name="Vacherie B."/>
            <person name="Vallenet D."/>
            <person name="Medigue C."/>
            <person name="Rocha E.P.C."/>
            <person name="Denamur E."/>
        </authorList>
    </citation>
    <scope>NUCLEOTIDE SEQUENCE [LARGE SCALE GENOMIC DNA]</scope>
    <source>
        <strain>IAI1</strain>
    </source>
</reference>